<organism>
    <name type="scientific">Thermoanaerobacter sp. (strain X514)</name>
    <dbReference type="NCBI Taxonomy" id="399726"/>
    <lineage>
        <taxon>Bacteria</taxon>
        <taxon>Bacillati</taxon>
        <taxon>Bacillota</taxon>
        <taxon>Clostridia</taxon>
        <taxon>Thermoanaerobacterales</taxon>
        <taxon>Thermoanaerobacteraceae</taxon>
        <taxon>Thermoanaerobacter</taxon>
    </lineage>
</organism>
<evidence type="ECO:0000255" key="1">
    <source>
        <dbReference type="HAMAP-Rule" id="MF_00186"/>
    </source>
</evidence>
<keyword id="KW-0067">ATP-binding</keyword>
<keyword id="KW-0319">Glycerol metabolism</keyword>
<keyword id="KW-0418">Kinase</keyword>
<keyword id="KW-0547">Nucleotide-binding</keyword>
<keyword id="KW-0808">Transferase</keyword>
<dbReference type="EC" id="2.7.1.30" evidence="1"/>
<dbReference type="EMBL" id="CP000923">
    <property type="protein sequence ID" value="ABY92319.1"/>
    <property type="molecule type" value="Genomic_DNA"/>
</dbReference>
<dbReference type="RefSeq" id="WP_009052782.1">
    <property type="nucleotide sequence ID" value="NC_010320.1"/>
</dbReference>
<dbReference type="SMR" id="B0K643"/>
<dbReference type="KEGG" id="tex:Teth514_1020"/>
<dbReference type="HOGENOM" id="CLU_009281_2_3_9"/>
<dbReference type="UniPathway" id="UPA00618">
    <property type="reaction ID" value="UER00672"/>
</dbReference>
<dbReference type="Proteomes" id="UP000002155">
    <property type="component" value="Chromosome"/>
</dbReference>
<dbReference type="GO" id="GO:0005829">
    <property type="term" value="C:cytosol"/>
    <property type="evidence" value="ECO:0007669"/>
    <property type="project" value="TreeGrafter"/>
</dbReference>
<dbReference type="GO" id="GO:0005524">
    <property type="term" value="F:ATP binding"/>
    <property type="evidence" value="ECO:0007669"/>
    <property type="project" value="UniProtKB-UniRule"/>
</dbReference>
<dbReference type="GO" id="GO:0004370">
    <property type="term" value="F:glycerol kinase activity"/>
    <property type="evidence" value="ECO:0000250"/>
    <property type="project" value="UniProtKB"/>
</dbReference>
<dbReference type="GO" id="GO:0019563">
    <property type="term" value="P:glycerol catabolic process"/>
    <property type="evidence" value="ECO:0007669"/>
    <property type="project" value="UniProtKB-UniRule"/>
</dbReference>
<dbReference type="GO" id="GO:0006071">
    <property type="term" value="P:glycerol metabolic process"/>
    <property type="evidence" value="ECO:0000250"/>
    <property type="project" value="UniProtKB"/>
</dbReference>
<dbReference type="GO" id="GO:0006072">
    <property type="term" value="P:glycerol-3-phosphate metabolic process"/>
    <property type="evidence" value="ECO:0007669"/>
    <property type="project" value="InterPro"/>
</dbReference>
<dbReference type="CDD" id="cd07769">
    <property type="entry name" value="ASKHA_NBD_FGGY_GK"/>
    <property type="match status" value="1"/>
</dbReference>
<dbReference type="FunFam" id="3.30.420.40:FF:000007">
    <property type="entry name" value="Glycerol kinase"/>
    <property type="match status" value="1"/>
</dbReference>
<dbReference type="FunFam" id="3.30.420.40:FF:000008">
    <property type="entry name" value="Glycerol kinase"/>
    <property type="match status" value="1"/>
</dbReference>
<dbReference type="Gene3D" id="3.30.420.40">
    <property type="match status" value="2"/>
</dbReference>
<dbReference type="HAMAP" id="MF_00186">
    <property type="entry name" value="Glycerol_kin"/>
    <property type="match status" value="1"/>
</dbReference>
<dbReference type="InterPro" id="IPR043129">
    <property type="entry name" value="ATPase_NBD"/>
</dbReference>
<dbReference type="InterPro" id="IPR000577">
    <property type="entry name" value="Carb_kinase_FGGY"/>
</dbReference>
<dbReference type="InterPro" id="IPR018483">
    <property type="entry name" value="Carb_kinase_FGGY_CS"/>
</dbReference>
<dbReference type="InterPro" id="IPR018485">
    <property type="entry name" value="FGGY_C"/>
</dbReference>
<dbReference type="InterPro" id="IPR018484">
    <property type="entry name" value="FGGY_N"/>
</dbReference>
<dbReference type="InterPro" id="IPR005999">
    <property type="entry name" value="Glycerol_kin"/>
</dbReference>
<dbReference type="NCBIfam" id="TIGR01311">
    <property type="entry name" value="glycerol_kin"/>
    <property type="match status" value="1"/>
</dbReference>
<dbReference type="NCBIfam" id="NF000756">
    <property type="entry name" value="PRK00047.1"/>
    <property type="match status" value="1"/>
</dbReference>
<dbReference type="PANTHER" id="PTHR10196:SF69">
    <property type="entry name" value="GLYCEROL KINASE"/>
    <property type="match status" value="1"/>
</dbReference>
<dbReference type="PANTHER" id="PTHR10196">
    <property type="entry name" value="SUGAR KINASE"/>
    <property type="match status" value="1"/>
</dbReference>
<dbReference type="Pfam" id="PF02782">
    <property type="entry name" value="FGGY_C"/>
    <property type="match status" value="1"/>
</dbReference>
<dbReference type="Pfam" id="PF00370">
    <property type="entry name" value="FGGY_N"/>
    <property type="match status" value="1"/>
</dbReference>
<dbReference type="PIRSF" id="PIRSF000538">
    <property type="entry name" value="GlpK"/>
    <property type="match status" value="1"/>
</dbReference>
<dbReference type="SUPFAM" id="SSF53067">
    <property type="entry name" value="Actin-like ATPase domain"/>
    <property type="match status" value="2"/>
</dbReference>
<dbReference type="PROSITE" id="PS00933">
    <property type="entry name" value="FGGY_KINASES_1"/>
    <property type="match status" value="1"/>
</dbReference>
<dbReference type="PROSITE" id="PS00445">
    <property type="entry name" value="FGGY_KINASES_2"/>
    <property type="match status" value="1"/>
</dbReference>
<feature type="chain" id="PRO_1000098770" description="Glycerol kinase">
    <location>
        <begin position="1"/>
        <end position="497"/>
    </location>
</feature>
<feature type="binding site" evidence="1">
    <location>
        <position position="12"/>
    </location>
    <ligand>
        <name>ADP</name>
        <dbReference type="ChEBI" id="CHEBI:456216"/>
    </ligand>
</feature>
<feature type="binding site" evidence="1">
    <location>
        <position position="12"/>
    </location>
    <ligand>
        <name>ATP</name>
        <dbReference type="ChEBI" id="CHEBI:30616"/>
    </ligand>
</feature>
<feature type="binding site" evidence="1">
    <location>
        <position position="12"/>
    </location>
    <ligand>
        <name>sn-glycerol 3-phosphate</name>
        <dbReference type="ChEBI" id="CHEBI:57597"/>
    </ligand>
</feature>
<feature type="binding site" evidence="1">
    <location>
        <position position="13"/>
    </location>
    <ligand>
        <name>ATP</name>
        <dbReference type="ChEBI" id="CHEBI:30616"/>
    </ligand>
</feature>
<feature type="binding site" evidence="1">
    <location>
        <position position="14"/>
    </location>
    <ligand>
        <name>ATP</name>
        <dbReference type="ChEBI" id="CHEBI:30616"/>
    </ligand>
</feature>
<feature type="binding site" evidence="1">
    <location>
        <position position="16"/>
    </location>
    <ligand>
        <name>ADP</name>
        <dbReference type="ChEBI" id="CHEBI:456216"/>
    </ligand>
</feature>
<feature type="binding site" evidence="1">
    <location>
        <position position="82"/>
    </location>
    <ligand>
        <name>glycerol</name>
        <dbReference type="ChEBI" id="CHEBI:17754"/>
    </ligand>
</feature>
<feature type="binding site" evidence="1">
    <location>
        <position position="82"/>
    </location>
    <ligand>
        <name>sn-glycerol 3-phosphate</name>
        <dbReference type="ChEBI" id="CHEBI:57597"/>
    </ligand>
</feature>
<feature type="binding site" evidence="1">
    <location>
        <position position="83"/>
    </location>
    <ligand>
        <name>glycerol</name>
        <dbReference type="ChEBI" id="CHEBI:17754"/>
    </ligand>
</feature>
<feature type="binding site" evidence="1">
    <location>
        <position position="83"/>
    </location>
    <ligand>
        <name>sn-glycerol 3-phosphate</name>
        <dbReference type="ChEBI" id="CHEBI:57597"/>
    </ligand>
</feature>
<feature type="binding site" evidence="1">
    <location>
        <position position="134"/>
    </location>
    <ligand>
        <name>glycerol</name>
        <dbReference type="ChEBI" id="CHEBI:17754"/>
    </ligand>
</feature>
<feature type="binding site" evidence="1">
    <location>
        <position position="134"/>
    </location>
    <ligand>
        <name>sn-glycerol 3-phosphate</name>
        <dbReference type="ChEBI" id="CHEBI:57597"/>
    </ligand>
</feature>
<feature type="binding site" evidence="1">
    <location>
        <position position="243"/>
    </location>
    <ligand>
        <name>glycerol</name>
        <dbReference type="ChEBI" id="CHEBI:17754"/>
    </ligand>
</feature>
<feature type="binding site" evidence="1">
    <location>
        <position position="243"/>
    </location>
    <ligand>
        <name>sn-glycerol 3-phosphate</name>
        <dbReference type="ChEBI" id="CHEBI:57597"/>
    </ligand>
</feature>
<feature type="binding site" evidence="1">
    <location>
        <position position="244"/>
    </location>
    <ligand>
        <name>glycerol</name>
        <dbReference type="ChEBI" id="CHEBI:17754"/>
    </ligand>
</feature>
<feature type="binding site" evidence="1">
    <location>
        <position position="265"/>
    </location>
    <ligand>
        <name>ADP</name>
        <dbReference type="ChEBI" id="CHEBI:456216"/>
    </ligand>
</feature>
<feature type="binding site" evidence="1">
    <location>
        <position position="265"/>
    </location>
    <ligand>
        <name>ATP</name>
        <dbReference type="ChEBI" id="CHEBI:30616"/>
    </ligand>
</feature>
<feature type="binding site" evidence="1">
    <location>
        <position position="308"/>
    </location>
    <ligand>
        <name>ADP</name>
        <dbReference type="ChEBI" id="CHEBI:456216"/>
    </ligand>
</feature>
<feature type="binding site" evidence="1">
    <location>
        <position position="308"/>
    </location>
    <ligand>
        <name>ATP</name>
        <dbReference type="ChEBI" id="CHEBI:30616"/>
    </ligand>
</feature>
<feature type="binding site" evidence="1">
    <location>
        <position position="312"/>
    </location>
    <ligand>
        <name>ATP</name>
        <dbReference type="ChEBI" id="CHEBI:30616"/>
    </ligand>
</feature>
<feature type="binding site" evidence="1">
    <location>
        <position position="409"/>
    </location>
    <ligand>
        <name>ADP</name>
        <dbReference type="ChEBI" id="CHEBI:456216"/>
    </ligand>
</feature>
<feature type="binding site" evidence="1">
    <location>
        <position position="409"/>
    </location>
    <ligand>
        <name>ATP</name>
        <dbReference type="ChEBI" id="CHEBI:30616"/>
    </ligand>
</feature>
<feature type="binding site" evidence="1">
    <location>
        <position position="413"/>
    </location>
    <ligand>
        <name>ADP</name>
        <dbReference type="ChEBI" id="CHEBI:456216"/>
    </ligand>
</feature>
<gene>
    <name evidence="1" type="primary">glpK</name>
    <name type="ordered locus">Teth514_1020</name>
</gene>
<name>GLPK_THEPX</name>
<protein>
    <recommendedName>
        <fullName evidence="1">Glycerol kinase</fullName>
        <ecNumber evidence="1">2.7.1.30</ecNumber>
    </recommendedName>
    <alternativeName>
        <fullName evidence="1">ATP:glycerol 3-phosphotransferase</fullName>
    </alternativeName>
    <alternativeName>
        <fullName evidence="1">Glycerokinase</fullName>
        <shortName evidence="1">GK</shortName>
    </alternativeName>
</protein>
<comment type="function">
    <text evidence="1">Key enzyme in the regulation of glycerol uptake and metabolism. Catalyzes the phosphorylation of glycerol to yield sn-glycerol 3-phosphate.</text>
</comment>
<comment type="catalytic activity">
    <reaction evidence="1">
        <text>glycerol + ATP = sn-glycerol 3-phosphate + ADP + H(+)</text>
        <dbReference type="Rhea" id="RHEA:21644"/>
        <dbReference type="ChEBI" id="CHEBI:15378"/>
        <dbReference type="ChEBI" id="CHEBI:17754"/>
        <dbReference type="ChEBI" id="CHEBI:30616"/>
        <dbReference type="ChEBI" id="CHEBI:57597"/>
        <dbReference type="ChEBI" id="CHEBI:456216"/>
        <dbReference type="EC" id="2.7.1.30"/>
    </reaction>
</comment>
<comment type="activity regulation">
    <text evidence="1">Activated by phosphorylation and inhibited by fructose 1,6-bisphosphate (FBP).</text>
</comment>
<comment type="pathway">
    <text evidence="1">Polyol metabolism; glycerol degradation via glycerol kinase pathway; sn-glycerol 3-phosphate from glycerol: step 1/1.</text>
</comment>
<comment type="subunit">
    <text evidence="1">Homotetramer and homodimer (in equilibrium).</text>
</comment>
<comment type="similarity">
    <text evidence="1">Belongs to the FGGY kinase family.</text>
</comment>
<sequence>MAKYIMAFDQGTTSSRAIIFDHSGKIVASQNQEFKQIYPKAGWVEHDPMEIWGTQIGVAKGVIEKAGINPEDIAAIGITNQRETTVVWDKNTGKPIYNAIVWQCRRTAPICDELKNKGFDKKIREKTGLVVDAYFSGTKIKWILDNVEGAREKAEKGELLFGNIDTWLIWNLTRGKVHVTDYSNASRTMLFNIHELKWDKEILEELNVPEQMLPEVKPSSYVYGYTDKSIFGVEIPIAGDAGDQQAALFGQACFKPGMAKNTYGTGCFMLMNTGEKAVPSNTGLLTTIAWGIDGKVEYALEGSIFIAGAAIQWLRDELRIIDNSPQSEEYALKVEDTNGVYVVPAFVGLGAPYWDMYARGTIVGLTRGAKREHIIRATLESIAYQTRDVLEAMQEDSGIKLQALKIDGGASANNFLMQFQSDILGVPVDRPQVIETTALGASYLAGLAVGFWNSKEEIEKNWNVDKHFEPAMDNEKREKLYKGWKKAVERAMKWAEE</sequence>
<accession>B0K643</accession>
<reference key="1">
    <citation type="submission" date="2008-01" db="EMBL/GenBank/DDBJ databases">
        <title>Complete sequence of Thermoanaerobacter sp. X514.</title>
        <authorList>
            <consortium name="US DOE Joint Genome Institute"/>
            <person name="Copeland A."/>
            <person name="Lucas S."/>
            <person name="Lapidus A."/>
            <person name="Barry K."/>
            <person name="Glavina del Rio T."/>
            <person name="Dalin E."/>
            <person name="Tice H."/>
            <person name="Pitluck S."/>
            <person name="Bruce D."/>
            <person name="Goodwin L."/>
            <person name="Saunders E."/>
            <person name="Brettin T."/>
            <person name="Detter J.C."/>
            <person name="Han C."/>
            <person name="Schmutz J."/>
            <person name="Larimer F."/>
            <person name="Land M."/>
            <person name="Hauser L."/>
            <person name="Kyrpides N."/>
            <person name="Kim E."/>
            <person name="Hemme C."/>
            <person name="Fields M.W."/>
            <person name="He Z."/>
            <person name="Zhou J."/>
            <person name="Richardson P."/>
        </authorList>
    </citation>
    <scope>NUCLEOTIDE SEQUENCE [LARGE SCALE GENOMIC DNA]</scope>
    <source>
        <strain>X514</strain>
    </source>
</reference>
<proteinExistence type="inferred from homology"/>